<keyword id="KW-0416">Keratin</keyword>
<keyword id="KW-1185">Reference proteome</keyword>
<keyword id="KW-0677">Repeat</keyword>
<gene>
    <name type="primary">Krtap21-1</name>
    <name type="synonym">Krtap16-7</name>
    <name evidence="7" type="synonym">Krtap16.7</name>
</gene>
<protein>
    <recommendedName>
        <fullName>Keratin-associated protein 21-1</fullName>
    </recommendedName>
    <alternativeName>
        <fullName evidence="9">Keratin-associated protein 16-7</fullName>
    </alternativeName>
    <alternativeName>
        <fullName evidence="7">Keratin-associated protein 16.7</fullName>
    </alternativeName>
</protein>
<dbReference type="EMBL" id="AF345297">
    <property type="protein sequence ID" value="AAK52895.1"/>
    <property type="molecule type" value="mRNA"/>
</dbReference>
<dbReference type="EMBL" id="AK003736">
    <property type="protein sequence ID" value="BAB22970.2"/>
    <property type="molecule type" value="mRNA"/>
</dbReference>
<dbReference type="CCDS" id="CCDS28311.1"/>
<dbReference type="STRING" id="10090.ENSMUSP00000077524"/>
<dbReference type="iPTMnet" id="Q925H4"/>
<dbReference type="PhosphoSitePlus" id="Q925H4"/>
<dbReference type="PaxDb" id="10090-ENSMUSP00000077524"/>
<dbReference type="AGR" id="MGI:2157767"/>
<dbReference type="MGI" id="MGI:2157767">
    <property type="gene designation" value="Krtap21-1"/>
</dbReference>
<dbReference type="eggNOG" id="ENOG502S2E1">
    <property type="taxonomic scope" value="Eukaryota"/>
</dbReference>
<dbReference type="InParanoid" id="Q925H4"/>
<dbReference type="PRO" id="PR:Q925H4"/>
<dbReference type="Proteomes" id="UP000000589">
    <property type="component" value="Unplaced"/>
</dbReference>
<dbReference type="RNAct" id="Q925H4">
    <property type="molecule type" value="protein"/>
</dbReference>
<dbReference type="GO" id="GO:0005882">
    <property type="term" value="C:intermediate filament"/>
    <property type="evidence" value="ECO:0007669"/>
    <property type="project" value="UniProtKB-KW"/>
</dbReference>
<dbReference type="GO" id="GO:0008283">
    <property type="term" value="P:cell population proliferation"/>
    <property type="evidence" value="ECO:0000315"/>
    <property type="project" value="MGI"/>
</dbReference>
<dbReference type="GO" id="GO:0048589">
    <property type="term" value="P:developmental growth"/>
    <property type="evidence" value="ECO:0000315"/>
    <property type="project" value="MGI"/>
</dbReference>
<dbReference type="GO" id="GO:0022405">
    <property type="term" value="P:hair cycle process"/>
    <property type="evidence" value="ECO:0000315"/>
    <property type="project" value="MGI"/>
</dbReference>
<dbReference type="GO" id="GO:0001942">
    <property type="term" value="P:hair follicle development"/>
    <property type="evidence" value="ECO:0000315"/>
    <property type="project" value="MGI"/>
</dbReference>
<dbReference type="GO" id="GO:0043480">
    <property type="term" value="P:pigment accumulation in tissues"/>
    <property type="evidence" value="ECO:0000315"/>
    <property type="project" value="MGI"/>
</dbReference>
<dbReference type="GO" id="GO:0031077">
    <property type="term" value="P:post-embryonic camera-type eye development"/>
    <property type="evidence" value="ECO:0000315"/>
    <property type="project" value="MGI"/>
</dbReference>
<dbReference type="GO" id="GO:0051726">
    <property type="term" value="P:regulation of cell cycle"/>
    <property type="evidence" value="ECO:0000315"/>
    <property type="project" value="MGI"/>
</dbReference>
<dbReference type="GO" id="GO:0007165">
    <property type="term" value="P:signal transduction"/>
    <property type="evidence" value="ECO:0000315"/>
    <property type="project" value="MGI"/>
</dbReference>
<dbReference type="GO" id="GO:0043588">
    <property type="term" value="P:skin development"/>
    <property type="evidence" value="ECO:0000315"/>
    <property type="project" value="MGI"/>
</dbReference>
<dbReference type="PANTHER" id="PTHR31294">
    <property type="match status" value="1"/>
</dbReference>
<dbReference type="PANTHER" id="PTHR31294:SF8">
    <property type="entry name" value="KERATIN-ASSOCIATED PROTEIN 21-1-RELATED"/>
    <property type="match status" value="1"/>
</dbReference>
<evidence type="ECO:0000250" key="1"/>
<evidence type="ECO:0000255" key="2"/>
<evidence type="ECO:0000269" key="3">
    <source>
    </source>
</evidence>
<evidence type="ECO:0000269" key="4">
    <source>
    </source>
</evidence>
<evidence type="ECO:0000269" key="5">
    <source>
    </source>
</evidence>
<evidence type="ECO:0000305" key="6"/>
<evidence type="ECO:0000312" key="7">
    <source>
        <dbReference type="EMBL" id="AAK52895.1"/>
    </source>
</evidence>
<evidence type="ECO:0000312" key="8">
    <source>
        <dbReference type="EMBL" id="BAB22970.2"/>
    </source>
</evidence>
<evidence type="ECO:0000312" key="9">
    <source>
        <dbReference type="MGI" id="MGI:2157767"/>
    </source>
</evidence>
<organism>
    <name type="scientific">Mus musculus</name>
    <name type="common">Mouse</name>
    <dbReference type="NCBI Taxonomy" id="10090"/>
    <lineage>
        <taxon>Eukaryota</taxon>
        <taxon>Metazoa</taxon>
        <taxon>Chordata</taxon>
        <taxon>Craniata</taxon>
        <taxon>Vertebrata</taxon>
        <taxon>Euteleostomi</taxon>
        <taxon>Mammalia</taxon>
        <taxon>Eutheria</taxon>
        <taxon>Euarchontoglires</taxon>
        <taxon>Glires</taxon>
        <taxon>Rodentia</taxon>
        <taxon>Myomorpha</taxon>
        <taxon>Muroidea</taxon>
        <taxon>Muridae</taxon>
        <taxon>Murinae</taxon>
        <taxon>Mus</taxon>
        <taxon>Mus</taxon>
    </lineage>
</organism>
<sequence length="128" mass="12539">MCCNYYGNSCGGCGYGSRYGYGCGYGSGYGCGYGSGYGCGYGSGYGCGYGSGYGCGYGSGYGCGYGSGYGCGYGSGYGCGYGSGYGCGYGSGYGCGYGSGYGCGYGSRYGCGYGSGCCSYRKCYSSCC</sequence>
<comment type="function">
    <text evidence="6">In the hair cortex, hair keratin intermediate filaments are embedded in an interfilamentous matrix, consisting of hair keratin-associated proteins (KRTAP), which are essential for the formation of a rigid and resistant hair shaft through their extensive disulfide bond cross-linking with abundant cysteine residues of hair keratins. The matrix proteins include the high-sulfur and high-glycine-tyrosine keratins.</text>
</comment>
<comment type="subunit">
    <text evidence="1">Interacts with hair keratins.</text>
</comment>
<comment type="tissue specificity">
    <text evidence="4 5">Strong expression in narrowly defined pattern restricted to the lower and middle cortical regions of the hair shaft in both developing and cycling hair. During hair follicle regression (catagen), expression levels decrease until expression is no longer detectable in follicles at resting stage (telogen).</text>
</comment>
<comment type="induction">
    <text evidence="3 5">Expression in skin and hair follicle is regulated by HOXC13 and by GATA3.</text>
</comment>
<comment type="similarity">
    <text evidence="6">Belongs to the KRTAP type 21 family.</text>
</comment>
<reference evidence="6 7" key="1">
    <citation type="journal article" date="2001" name="Development">
        <title>Overexpression of Hoxc13 in differentiating keratinocytes results in downregulation of a novel hair keratin gene cluster and alopecia.</title>
        <authorList>
            <person name="Tkatchenko A.V."/>
            <person name="Visconti R.P."/>
            <person name="Shang L."/>
            <person name="Papenbrock T."/>
            <person name="Pruett N.D."/>
            <person name="Ito T."/>
            <person name="Ogawa M."/>
            <person name="Awgulewitsch A."/>
        </authorList>
    </citation>
    <scope>NUCLEOTIDE SEQUENCE [MRNA]</scope>
    <scope>INDUCTION</scope>
    <source>
        <strain evidence="7">FVB/NJ</strain>
        <tissue evidence="3">Skin</tissue>
    </source>
</reference>
<reference evidence="8" key="2">
    <citation type="journal article" date="2005" name="Science">
        <title>The transcriptional landscape of the mammalian genome.</title>
        <authorList>
            <person name="Carninci P."/>
            <person name="Kasukawa T."/>
            <person name="Katayama S."/>
            <person name="Gough J."/>
            <person name="Frith M.C."/>
            <person name="Maeda N."/>
            <person name="Oyama R."/>
            <person name="Ravasi T."/>
            <person name="Lenhard B."/>
            <person name="Wells C."/>
            <person name="Kodzius R."/>
            <person name="Shimokawa K."/>
            <person name="Bajic V.B."/>
            <person name="Brenner S.E."/>
            <person name="Batalov S."/>
            <person name="Forrest A.R."/>
            <person name="Zavolan M."/>
            <person name="Davis M.J."/>
            <person name="Wilming L.G."/>
            <person name="Aidinis V."/>
            <person name="Allen J.E."/>
            <person name="Ambesi-Impiombato A."/>
            <person name="Apweiler R."/>
            <person name="Aturaliya R.N."/>
            <person name="Bailey T.L."/>
            <person name="Bansal M."/>
            <person name="Baxter L."/>
            <person name="Beisel K.W."/>
            <person name="Bersano T."/>
            <person name="Bono H."/>
            <person name="Chalk A.M."/>
            <person name="Chiu K.P."/>
            <person name="Choudhary V."/>
            <person name="Christoffels A."/>
            <person name="Clutterbuck D.R."/>
            <person name="Crowe M.L."/>
            <person name="Dalla E."/>
            <person name="Dalrymple B.P."/>
            <person name="de Bono B."/>
            <person name="Della Gatta G."/>
            <person name="di Bernardo D."/>
            <person name="Down T."/>
            <person name="Engstrom P."/>
            <person name="Fagiolini M."/>
            <person name="Faulkner G."/>
            <person name="Fletcher C.F."/>
            <person name="Fukushima T."/>
            <person name="Furuno M."/>
            <person name="Futaki S."/>
            <person name="Gariboldi M."/>
            <person name="Georgii-Hemming P."/>
            <person name="Gingeras T.R."/>
            <person name="Gojobori T."/>
            <person name="Green R.E."/>
            <person name="Gustincich S."/>
            <person name="Harbers M."/>
            <person name="Hayashi Y."/>
            <person name="Hensch T.K."/>
            <person name="Hirokawa N."/>
            <person name="Hill D."/>
            <person name="Huminiecki L."/>
            <person name="Iacono M."/>
            <person name="Ikeo K."/>
            <person name="Iwama A."/>
            <person name="Ishikawa T."/>
            <person name="Jakt M."/>
            <person name="Kanapin A."/>
            <person name="Katoh M."/>
            <person name="Kawasawa Y."/>
            <person name="Kelso J."/>
            <person name="Kitamura H."/>
            <person name="Kitano H."/>
            <person name="Kollias G."/>
            <person name="Krishnan S.P."/>
            <person name="Kruger A."/>
            <person name="Kummerfeld S.K."/>
            <person name="Kurochkin I.V."/>
            <person name="Lareau L.F."/>
            <person name="Lazarevic D."/>
            <person name="Lipovich L."/>
            <person name="Liu J."/>
            <person name="Liuni S."/>
            <person name="McWilliam S."/>
            <person name="Madan Babu M."/>
            <person name="Madera M."/>
            <person name="Marchionni L."/>
            <person name="Matsuda H."/>
            <person name="Matsuzawa S."/>
            <person name="Miki H."/>
            <person name="Mignone F."/>
            <person name="Miyake S."/>
            <person name="Morris K."/>
            <person name="Mottagui-Tabar S."/>
            <person name="Mulder N."/>
            <person name="Nakano N."/>
            <person name="Nakauchi H."/>
            <person name="Ng P."/>
            <person name="Nilsson R."/>
            <person name="Nishiguchi S."/>
            <person name="Nishikawa S."/>
            <person name="Nori F."/>
            <person name="Ohara O."/>
            <person name="Okazaki Y."/>
            <person name="Orlando V."/>
            <person name="Pang K.C."/>
            <person name="Pavan W.J."/>
            <person name="Pavesi G."/>
            <person name="Pesole G."/>
            <person name="Petrovsky N."/>
            <person name="Piazza S."/>
            <person name="Reed J."/>
            <person name="Reid J.F."/>
            <person name="Ring B.Z."/>
            <person name="Ringwald M."/>
            <person name="Rost B."/>
            <person name="Ruan Y."/>
            <person name="Salzberg S.L."/>
            <person name="Sandelin A."/>
            <person name="Schneider C."/>
            <person name="Schoenbach C."/>
            <person name="Sekiguchi K."/>
            <person name="Semple C.A."/>
            <person name="Seno S."/>
            <person name="Sessa L."/>
            <person name="Sheng Y."/>
            <person name="Shibata Y."/>
            <person name="Shimada H."/>
            <person name="Shimada K."/>
            <person name="Silva D."/>
            <person name="Sinclair B."/>
            <person name="Sperling S."/>
            <person name="Stupka E."/>
            <person name="Sugiura K."/>
            <person name="Sultana R."/>
            <person name="Takenaka Y."/>
            <person name="Taki K."/>
            <person name="Tammoja K."/>
            <person name="Tan S.L."/>
            <person name="Tang S."/>
            <person name="Taylor M.S."/>
            <person name="Tegner J."/>
            <person name="Teichmann S.A."/>
            <person name="Ueda H.R."/>
            <person name="van Nimwegen E."/>
            <person name="Verardo R."/>
            <person name="Wei C.L."/>
            <person name="Yagi K."/>
            <person name="Yamanishi H."/>
            <person name="Zabarovsky E."/>
            <person name="Zhu S."/>
            <person name="Zimmer A."/>
            <person name="Hide W."/>
            <person name="Bult C."/>
            <person name="Grimmond S.M."/>
            <person name="Teasdale R.D."/>
            <person name="Liu E.T."/>
            <person name="Brusic V."/>
            <person name="Quackenbush J."/>
            <person name="Wahlestedt C."/>
            <person name="Mattick J.S."/>
            <person name="Hume D.A."/>
            <person name="Kai C."/>
            <person name="Sasaki D."/>
            <person name="Tomaru Y."/>
            <person name="Fukuda S."/>
            <person name="Kanamori-Katayama M."/>
            <person name="Suzuki M."/>
            <person name="Aoki J."/>
            <person name="Arakawa T."/>
            <person name="Iida J."/>
            <person name="Imamura K."/>
            <person name="Itoh M."/>
            <person name="Kato T."/>
            <person name="Kawaji H."/>
            <person name="Kawagashira N."/>
            <person name="Kawashima T."/>
            <person name="Kojima M."/>
            <person name="Kondo S."/>
            <person name="Konno H."/>
            <person name="Nakano K."/>
            <person name="Ninomiya N."/>
            <person name="Nishio T."/>
            <person name="Okada M."/>
            <person name="Plessy C."/>
            <person name="Shibata K."/>
            <person name="Shiraki T."/>
            <person name="Suzuki S."/>
            <person name="Tagami M."/>
            <person name="Waki K."/>
            <person name="Watahiki A."/>
            <person name="Okamura-Oho Y."/>
            <person name="Suzuki H."/>
            <person name="Kawai J."/>
            <person name="Hayashizaki Y."/>
        </authorList>
    </citation>
    <scope>NUCLEOTIDE SEQUENCE [LARGE SCALE MRNA]</scope>
    <source>
        <strain evidence="8">C57BL/6J</strain>
        <tissue evidence="8">Embryo</tissue>
    </source>
</reference>
<reference evidence="6" key="3">
    <citation type="journal article" date="2004" name="J. Biol. Chem.">
        <title>Krtap16, characterization of a new hair keratin-associated protein (KAP) gene complex on mouse chromosome 16 and evidence for regulation by Hoxc13.</title>
        <authorList>
            <person name="Pruett N.D."/>
            <person name="Tkatchenko T.V."/>
            <person name="Jave-Suarez L."/>
            <person name="Jacobs D.F."/>
            <person name="Potter C.S."/>
            <person name="Tkatchenko A.V."/>
            <person name="Schweizer J."/>
            <person name="Awgulewitsch A."/>
        </authorList>
    </citation>
    <scope>TISSUE SPECIFICITY</scope>
</reference>
<reference evidence="6" key="4">
    <citation type="journal article" date="2007" name="Development">
        <title>Transcriptome and phenotypic analysis reveals Gata3-dependent signalling pathways in murine hair follicles.</title>
        <authorList>
            <person name="Kurek D."/>
            <person name="Garinis G.A."/>
            <person name="van Doorninck J.H."/>
            <person name="van der Wees J."/>
            <person name="Grosveld F.G."/>
        </authorList>
    </citation>
    <scope>TISSUE SPECIFICITY</scope>
    <scope>INDUCTION</scope>
</reference>
<feature type="chain" id="PRO_0000356216" description="Keratin-associated protein 21-1">
    <location>
        <begin position="1"/>
        <end position="128"/>
    </location>
</feature>
<feature type="region of interest" description="51 X 2 AA repeats of G-[YCGS]" evidence="2">
    <location>
        <begin position="11"/>
        <end position="117"/>
    </location>
</feature>
<feature type="sequence conflict" description="In Ref. 1; AAK52895." evidence="6" ref="1">
    <original>G</original>
    <variation>S</variation>
    <location>
        <position position="76"/>
    </location>
</feature>
<feature type="sequence conflict" description="In Ref. 1; AAK52895." evidence="6" ref="1">
    <original>S</original>
    <variation>T</variation>
    <location>
        <position position="99"/>
    </location>
</feature>
<feature type="sequence conflict" description="In Ref. 1; AAK52895." evidence="6" ref="1">
    <original>Y</original>
    <variation>C</variation>
    <location>
        <position position="113"/>
    </location>
</feature>
<name>KR211_MOUSE</name>
<accession>Q925H4</accession>
<accession>Q9D1B6</accession>
<proteinExistence type="evidence at transcript level"/>